<proteinExistence type="inferred from homology"/>
<protein>
    <recommendedName>
        <fullName>Mitochondrial thiamine pyrophosphate carrier 1</fullName>
    </recommendedName>
</protein>
<feature type="chain" id="PRO_0000320477" description="Mitochondrial thiamine pyrophosphate carrier 1">
    <location>
        <begin position="1"/>
        <end position="314"/>
    </location>
</feature>
<feature type="transmembrane region" description="Helical; Name=1" evidence="2">
    <location>
        <begin position="14"/>
        <end position="30"/>
    </location>
</feature>
<feature type="transmembrane region" description="Helical; Name=2" evidence="2">
    <location>
        <begin position="84"/>
        <end position="100"/>
    </location>
</feature>
<feature type="transmembrane region" description="Helical; Name=3" evidence="2">
    <location>
        <begin position="116"/>
        <end position="136"/>
    </location>
</feature>
<feature type="transmembrane region" description="Helical; Name=4" evidence="2">
    <location>
        <begin position="170"/>
        <end position="186"/>
    </location>
</feature>
<feature type="transmembrane region" description="Helical; Name=5" evidence="2">
    <location>
        <begin position="217"/>
        <end position="233"/>
    </location>
</feature>
<feature type="transmembrane region" description="Helical; Name=6" evidence="2">
    <location>
        <begin position="285"/>
        <end position="302"/>
    </location>
</feature>
<feature type="repeat" description="Solcar 1">
    <location>
        <begin position="14"/>
        <end position="103"/>
    </location>
</feature>
<feature type="repeat" description="Solcar 2">
    <location>
        <begin position="110"/>
        <end position="195"/>
    </location>
</feature>
<feature type="repeat" description="Solcar 3">
    <location>
        <begin position="210"/>
        <end position="310"/>
    </location>
</feature>
<keyword id="KW-0472">Membrane</keyword>
<keyword id="KW-0496">Mitochondrion</keyword>
<keyword id="KW-0999">Mitochondrion inner membrane</keyword>
<keyword id="KW-0677">Repeat</keyword>
<keyword id="KW-0812">Transmembrane</keyword>
<keyword id="KW-1133">Transmembrane helix</keyword>
<keyword id="KW-0813">Transport</keyword>
<accession>A6ZV78</accession>
<name>TPC1_YEAS7</name>
<comment type="function">
    <text evidence="1">Mitochondrial transporter that mediates uptake of thiamine pyrophosphate (ThPP) into mitochondria.</text>
</comment>
<comment type="subcellular location">
    <subcellularLocation>
        <location evidence="1">Mitochondrion inner membrane</location>
        <topology evidence="1">Multi-pass membrane protein</topology>
    </subcellularLocation>
</comment>
<comment type="induction">
    <text evidence="1">Expression is regulated by carbon source, with very low expression with succinate, acetate, ethanol or pyruvate as carbon source.</text>
</comment>
<comment type="similarity">
    <text evidence="3">Belongs to the mitochondrial carrier (TC 2.A.29) family.</text>
</comment>
<reference key="1">
    <citation type="journal article" date="2007" name="Proc. Natl. Acad. Sci. U.S.A.">
        <title>Genome sequencing and comparative analysis of Saccharomyces cerevisiae strain YJM789.</title>
        <authorList>
            <person name="Wei W."/>
            <person name="McCusker J.H."/>
            <person name="Hyman R.W."/>
            <person name="Jones T."/>
            <person name="Ning Y."/>
            <person name="Cao Z."/>
            <person name="Gu Z."/>
            <person name="Bruno D."/>
            <person name="Miranda M."/>
            <person name="Nguyen M."/>
            <person name="Wilhelmy J."/>
            <person name="Komp C."/>
            <person name="Tamse R."/>
            <person name="Wang X."/>
            <person name="Jia P."/>
            <person name="Luedi P."/>
            <person name="Oefner P.J."/>
            <person name="David L."/>
            <person name="Dietrich F.S."/>
            <person name="Li Y."/>
            <person name="Davis R.W."/>
            <person name="Steinmetz L.M."/>
        </authorList>
    </citation>
    <scope>NUCLEOTIDE SEQUENCE [LARGE SCALE GENOMIC DNA]</scope>
    <source>
        <strain>YJM789</strain>
    </source>
</reference>
<sequence length="314" mass="35121">MFKEEDSLRKGQNVAAWKTLLAGAVSGLLARSITAPMDTIKIRLQLTPANGLKPFGSQVMEVARSMIKNEGIRAFWKGNIPGSLLYVTYGSAQFSSYSLFNRYLTPFGLEARLHSLVVGAFAGITSSIVSYPFDVLRTRLVANNQMHSMSITREVRDIWKLEGLPGFFKGSIASMTTITLTASIMFGTYETIRIYCDENEKTTAAHKKWELATLNHSAGTIGGVIAKIITFPLETIRRRMQFMNSKHLEKFSRHSSVYGSYKGYGFARIGLQILKQEGVSSLYRGILVALSKTIPTTFVSFWGYETAIHYLRMY</sequence>
<evidence type="ECO:0000250" key="1"/>
<evidence type="ECO:0000255" key="2"/>
<evidence type="ECO:0000305" key="3"/>
<organism>
    <name type="scientific">Saccharomyces cerevisiae (strain YJM789)</name>
    <name type="common">Baker's yeast</name>
    <dbReference type="NCBI Taxonomy" id="307796"/>
    <lineage>
        <taxon>Eukaryota</taxon>
        <taxon>Fungi</taxon>
        <taxon>Dikarya</taxon>
        <taxon>Ascomycota</taxon>
        <taxon>Saccharomycotina</taxon>
        <taxon>Saccharomycetes</taxon>
        <taxon>Saccharomycetales</taxon>
        <taxon>Saccharomycetaceae</taxon>
        <taxon>Saccharomyces</taxon>
    </lineage>
</organism>
<dbReference type="EMBL" id="AAFW02000102">
    <property type="protein sequence ID" value="EDN61686.1"/>
    <property type="molecule type" value="Genomic_DNA"/>
</dbReference>
<dbReference type="SMR" id="A6ZV78"/>
<dbReference type="HOGENOM" id="CLU_015166_10_3_1"/>
<dbReference type="Proteomes" id="UP000007060">
    <property type="component" value="Unassembled WGS sequence"/>
</dbReference>
<dbReference type="GO" id="GO:0005743">
    <property type="term" value="C:mitochondrial inner membrane"/>
    <property type="evidence" value="ECO:0007669"/>
    <property type="project" value="UniProtKB-SubCell"/>
</dbReference>
<dbReference type="GO" id="GO:0055085">
    <property type="term" value="P:transmembrane transport"/>
    <property type="evidence" value="ECO:0007669"/>
    <property type="project" value="InterPro"/>
</dbReference>
<dbReference type="FunFam" id="1.50.40.10:FF:000176">
    <property type="entry name" value="TPC1p Mitochondrial membrane transporter"/>
    <property type="match status" value="1"/>
</dbReference>
<dbReference type="Gene3D" id="1.50.40.10">
    <property type="entry name" value="Mitochondrial carrier domain"/>
    <property type="match status" value="1"/>
</dbReference>
<dbReference type="InterPro" id="IPR002067">
    <property type="entry name" value="Mit_carrier"/>
</dbReference>
<dbReference type="InterPro" id="IPR018108">
    <property type="entry name" value="Mitochondrial_sb/sol_carrier"/>
</dbReference>
<dbReference type="InterPro" id="IPR023395">
    <property type="entry name" value="Mt_carrier_dom_sf"/>
</dbReference>
<dbReference type="PANTHER" id="PTHR24089">
    <property type="entry name" value="SOLUTE CARRIER FAMILY 25"/>
    <property type="match status" value="1"/>
</dbReference>
<dbReference type="Pfam" id="PF00153">
    <property type="entry name" value="Mito_carr"/>
    <property type="match status" value="3"/>
</dbReference>
<dbReference type="PRINTS" id="PR00926">
    <property type="entry name" value="MITOCARRIER"/>
</dbReference>
<dbReference type="SUPFAM" id="SSF103506">
    <property type="entry name" value="Mitochondrial carrier"/>
    <property type="match status" value="1"/>
</dbReference>
<dbReference type="PROSITE" id="PS50920">
    <property type="entry name" value="SOLCAR"/>
    <property type="match status" value="3"/>
</dbReference>
<gene>
    <name type="primary">TPC1</name>
    <name type="ORF">SCY_2311</name>
</gene>